<organism>
    <name type="scientific">Eremothecium gossypii (strain ATCC 10895 / CBS 109.51 / FGSC 9923 / NRRL Y-1056)</name>
    <name type="common">Yeast</name>
    <name type="synonym">Ashbya gossypii</name>
    <dbReference type="NCBI Taxonomy" id="284811"/>
    <lineage>
        <taxon>Eukaryota</taxon>
        <taxon>Fungi</taxon>
        <taxon>Dikarya</taxon>
        <taxon>Ascomycota</taxon>
        <taxon>Saccharomycotina</taxon>
        <taxon>Saccharomycetes</taxon>
        <taxon>Saccharomycetales</taxon>
        <taxon>Saccharomycetaceae</taxon>
        <taxon>Eremothecium</taxon>
    </lineage>
</organism>
<gene>
    <name type="primary">POL2</name>
    <name type="ordered locus">AFR657C</name>
</gene>
<protein>
    <recommendedName>
        <fullName>DNA polymerase epsilon catalytic subunit A</fullName>
        <ecNumber evidence="2">2.7.7.7</ecNumber>
    </recommendedName>
    <alternativeName>
        <fullName>DNA polymerase II subunit A</fullName>
    </alternativeName>
</protein>
<keyword id="KW-0004">4Fe-4S</keyword>
<keyword id="KW-0235">DNA replication</keyword>
<keyword id="KW-0238">DNA-binding</keyword>
<keyword id="KW-0239">DNA-directed DNA polymerase</keyword>
<keyword id="KW-0408">Iron</keyword>
<keyword id="KW-0411">Iron-sulfur</keyword>
<keyword id="KW-0479">Metal-binding</keyword>
<keyword id="KW-0548">Nucleotidyltransferase</keyword>
<keyword id="KW-0539">Nucleus</keyword>
<keyword id="KW-1185">Reference proteome</keyword>
<keyword id="KW-0808">Transferase</keyword>
<keyword id="KW-0862">Zinc</keyword>
<keyword id="KW-0863">Zinc-finger</keyword>
<accession>Q752B8</accession>
<evidence type="ECO:0000250" key="1"/>
<evidence type="ECO:0000250" key="2">
    <source>
        <dbReference type="UniProtKB" id="P15436"/>
    </source>
</evidence>
<evidence type="ECO:0000305" key="3"/>
<proteinExistence type="inferred from homology"/>
<name>DPOE_EREGS</name>
<reference key="1">
    <citation type="journal article" date="2004" name="Science">
        <title>The Ashbya gossypii genome as a tool for mapping the ancient Saccharomyces cerevisiae genome.</title>
        <authorList>
            <person name="Dietrich F.S."/>
            <person name="Voegeli S."/>
            <person name="Brachat S."/>
            <person name="Lerch A."/>
            <person name="Gates K."/>
            <person name="Steiner S."/>
            <person name="Mohr C."/>
            <person name="Poehlmann R."/>
            <person name="Luedi P."/>
            <person name="Choi S."/>
            <person name="Wing R.A."/>
            <person name="Flavier A."/>
            <person name="Gaffney T.D."/>
            <person name="Philippsen P."/>
        </authorList>
    </citation>
    <scope>NUCLEOTIDE SEQUENCE [LARGE SCALE GENOMIC DNA]</scope>
    <source>
        <strain>ATCC 10895 / CBS 109.51 / FGSC 9923 / NRRL Y-1056</strain>
    </source>
</reference>
<reference key="2">
    <citation type="journal article" date="2013" name="G3 (Bethesda)">
        <title>Genomes of Ashbya fungi isolated from insects reveal four mating-type loci, numerous translocations, lack of transposons, and distinct gene duplications.</title>
        <authorList>
            <person name="Dietrich F.S."/>
            <person name="Voegeli S."/>
            <person name="Kuo S."/>
            <person name="Philippsen P."/>
        </authorList>
    </citation>
    <scope>GENOME REANNOTATION</scope>
    <scope>SEQUENCE REVISION TO 223; 226; 244 AND 272-273</scope>
    <source>
        <strain>ATCC 10895 / CBS 109.51 / FGSC 9923 / NRRL Y-1056</strain>
    </source>
</reference>
<dbReference type="EC" id="2.7.7.7" evidence="2"/>
<dbReference type="EMBL" id="AE016819">
    <property type="protein sequence ID" value="AAS54029.2"/>
    <property type="molecule type" value="Genomic_DNA"/>
</dbReference>
<dbReference type="RefSeq" id="NP_986205.2">
    <property type="nucleotide sequence ID" value="NM_212341.2"/>
</dbReference>
<dbReference type="SMR" id="Q752B8"/>
<dbReference type="FunCoup" id="Q752B8">
    <property type="interactions" value="767"/>
</dbReference>
<dbReference type="STRING" id="284811.Q752B8"/>
<dbReference type="EnsemblFungi" id="AAS54029">
    <property type="protein sequence ID" value="AAS54029"/>
    <property type="gene ID" value="AGOS_AFR657C"/>
</dbReference>
<dbReference type="GeneID" id="4622494"/>
<dbReference type="KEGG" id="ago:AGOS_AFR657C"/>
<dbReference type="eggNOG" id="KOG1798">
    <property type="taxonomic scope" value="Eukaryota"/>
</dbReference>
<dbReference type="HOGENOM" id="CLU_000556_0_1_1"/>
<dbReference type="InParanoid" id="Q752B8"/>
<dbReference type="OMA" id="MLDQCRY"/>
<dbReference type="OrthoDB" id="10060449at2759"/>
<dbReference type="Proteomes" id="UP000000591">
    <property type="component" value="Chromosome VI"/>
</dbReference>
<dbReference type="GO" id="GO:0140445">
    <property type="term" value="C:chromosome, telomeric repeat region"/>
    <property type="evidence" value="ECO:0007669"/>
    <property type="project" value="EnsemblFungi"/>
</dbReference>
<dbReference type="GO" id="GO:0008622">
    <property type="term" value="C:epsilon DNA polymerase complex"/>
    <property type="evidence" value="ECO:0000318"/>
    <property type="project" value="GO_Central"/>
</dbReference>
<dbReference type="GO" id="GO:0043596">
    <property type="term" value="C:nuclear replication fork"/>
    <property type="evidence" value="ECO:0007669"/>
    <property type="project" value="EnsemblFungi"/>
</dbReference>
<dbReference type="GO" id="GO:0051539">
    <property type="term" value="F:4 iron, 4 sulfur cluster binding"/>
    <property type="evidence" value="ECO:0007669"/>
    <property type="project" value="UniProtKB-KW"/>
</dbReference>
<dbReference type="GO" id="GO:0003677">
    <property type="term" value="F:DNA binding"/>
    <property type="evidence" value="ECO:0000318"/>
    <property type="project" value="GO_Central"/>
</dbReference>
<dbReference type="GO" id="GO:0003887">
    <property type="term" value="F:DNA-directed DNA polymerase activity"/>
    <property type="evidence" value="ECO:0000318"/>
    <property type="project" value="GO_Central"/>
</dbReference>
<dbReference type="GO" id="GO:0003690">
    <property type="term" value="F:double-stranded DNA binding"/>
    <property type="evidence" value="ECO:0007669"/>
    <property type="project" value="EnsemblFungi"/>
</dbReference>
<dbReference type="GO" id="GO:0000166">
    <property type="term" value="F:nucleotide binding"/>
    <property type="evidence" value="ECO:0007669"/>
    <property type="project" value="InterPro"/>
</dbReference>
<dbReference type="GO" id="GO:0008310">
    <property type="term" value="F:single-stranded DNA 3'-5' DNA exonuclease activity"/>
    <property type="evidence" value="ECO:0000318"/>
    <property type="project" value="GO_Central"/>
</dbReference>
<dbReference type="GO" id="GO:0003697">
    <property type="term" value="F:single-stranded DNA binding"/>
    <property type="evidence" value="ECO:0007669"/>
    <property type="project" value="EnsemblFungi"/>
</dbReference>
<dbReference type="GO" id="GO:0032183">
    <property type="term" value="F:SUMO binding"/>
    <property type="evidence" value="ECO:0007669"/>
    <property type="project" value="EnsemblFungi"/>
</dbReference>
<dbReference type="GO" id="GO:0008270">
    <property type="term" value="F:zinc ion binding"/>
    <property type="evidence" value="ECO:0007669"/>
    <property type="project" value="UniProtKB-KW"/>
</dbReference>
<dbReference type="GO" id="GO:0006287">
    <property type="term" value="P:base-excision repair, gap-filling"/>
    <property type="evidence" value="ECO:0000318"/>
    <property type="project" value="GO_Central"/>
</dbReference>
<dbReference type="GO" id="GO:0034080">
    <property type="term" value="P:CENP-A containing chromatin assembly"/>
    <property type="evidence" value="ECO:0007669"/>
    <property type="project" value="EnsemblFungi"/>
</dbReference>
<dbReference type="GO" id="GO:0140529">
    <property type="term" value="P:CMG complex assembly"/>
    <property type="evidence" value="ECO:0007669"/>
    <property type="project" value="EnsemblFungi"/>
</dbReference>
<dbReference type="GO" id="GO:0045004">
    <property type="term" value="P:DNA replication proofreading"/>
    <property type="evidence" value="ECO:0000318"/>
    <property type="project" value="GO_Central"/>
</dbReference>
<dbReference type="GO" id="GO:0006303">
    <property type="term" value="P:double-strand break repair via nonhomologous end joining"/>
    <property type="evidence" value="ECO:0007669"/>
    <property type="project" value="EnsemblFungi"/>
</dbReference>
<dbReference type="GO" id="GO:0042276">
    <property type="term" value="P:error-prone translesion synthesis"/>
    <property type="evidence" value="ECO:0007669"/>
    <property type="project" value="EnsemblFungi"/>
</dbReference>
<dbReference type="GO" id="GO:0035822">
    <property type="term" value="P:gene conversion"/>
    <property type="evidence" value="ECO:0007669"/>
    <property type="project" value="EnsemblFungi"/>
</dbReference>
<dbReference type="GO" id="GO:0006272">
    <property type="term" value="P:leading strand elongation"/>
    <property type="evidence" value="ECO:0000318"/>
    <property type="project" value="GO_Central"/>
</dbReference>
<dbReference type="GO" id="GO:0000278">
    <property type="term" value="P:mitotic cell cycle"/>
    <property type="evidence" value="ECO:0000318"/>
    <property type="project" value="GO_Central"/>
</dbReference>
<dbReference type="GO" id="GO:0033314">
    <property type="term" value="P:mitotic DNA replication checkpoint signaling"/>
    <property type="evidence" value="ECO:0007669"/>
    <property type="project" value="EnsemblFungi"/>
</dbReference>
<dbReference type="GO" id="GO:1902975">
    <property type="term" value="P:mitotic DNA replication initiation"/>
    <property type="evidence" value="ECO:0007669"/>
    <property type="project" value="EnsemblFungi"/>
</dbReference>
<dbReference type="GO" id="GO:1903460">
    <property type="term" value="P:mitotic DNA replication leading strand elongation"/>
    <property type="evidence" value="ECO:0007669"/>
    <property type="project" value="EnsemblFungi"/>
</dbReference>
<dbReference type="GO" id="GO:0031573">
    <property type="term" value="P:mitotic intra-S DNA damage checkpoint signaling"/>
    <property type="evidence" value="ECO:0007669"/>
    <property type="project" value="EnsemblFungi"/>
</dbReference>
<dbReference type="GO" id="GO:0007064">
    <property type="term" value="P:mitotic sister chromatid cohesion"/>
    <property type="evidence" value="ECO:0007669"/>
    <property type="project" value="EnsemblFungi"/>
</dbReference>
<dbReference type="GO" id="GO:0006297">
    <property type="term" value="P:nucleotide-excision repair, DNA gap filling"/>
    <property type="evidence" value="ECO:0000318"/>
    <property type="project" value="GO_Central"/>
</dbReference>
<dbReference type="GO" id="GO:0031048">
    <property type="term" value="P:regulatory ncRNA-mediated heterochromatin formation"/>
    <property type="evidence" value="ECO:0007669"/>
    <property type="project" value="EnsemblFungi"/>
</dbReference>
<dbReference type="CDD" id="cd05779">
    <property type="entry name" value="DNA_polB_epsilon_exo"/>
    <property type="match status" value="1"/>
</dbReference>
<dbReference type="CDD" id="cd05535">
    <property type="entry name" value="POLBc_epsilon"/>
    <property type="match status" value="1"/>
</dbReference>
<dbReference type="FunFam" id="1.10.132.60:FF:000002">
    <property type="entry name" value="DNA polymerase epsilon catalytic subunit"/>
    <property type="match status" value="1"/>
</dbReference>
<dbReference type="FunFam" id="3.30.342.10:FF:000017">
    <property type="entry name" value="DNA polymerase epsilon catalytic subunit"/>
    <property type="match status" value="1"/>
</dbReference>
<dbReference type="FunFam" id="3.30.420.10:FF:000010">
    <property type="entry name" value="DNA polymerase epsilon catalytic subunit"/>
    <property type="match status" value="1"/>
</dbReference>
<dbReference type="FunFam" id="3.90.1600.10:FF:000006">
    <property type="entry name" value="DNA polymerase epsilon catalytic subunit"/>
    <property type="match status" value="1"/>
</dbReference>
<dbReference type="Gene3D" id="1.10.132.60">
    <property type="entry name" value="DNA polymerase family B, C-terminal domain"/>
    <property type="match status" value="1"/>
</dbReference>
<dbReference type="Gene3D" id="3.30.342.10">
    <property type="entry name" value="DNA Polymerase, chain B, domain 1"/>
    <property type="match status" value="1"/>
</dbReference>
<dbReference type="Gene3D" id="3.90.1600.10">
    <property type="entry name" value="Palm domain of DNA polymerase"/>
    <property type="match status" value="1"/>
</dbReference>
<dbReference type="Gene3D" id="3.30.420.10">
    <property type="entry name" value="Ribonuclease H-like superfamily/Ribonuclease H"/>
    <property type="match status" value="1"/>
</dbReference>
<dbReference type="InterPro" id="IPR006172">
    <property type="entry name" value="DNA-dir_DNA_pol_B"/>
</dbReference>
<dbReference type="InterPro" id="IPR006133">
    <property type="entry name" value="DNA-dir_DNA_pol_B_exonuc"/>
</dbReference>
<dbReference type="InterPro" id="IPR043502">
    <property type="entry name" value="DNA/RNA_pol_sf"/>
</dbReference>
<dbReference type="InterPro" id="IPR042087">
    <property type="entry name" value="DNA_pol_B_thumb"/>
</dbReference>
<dbReference type="InterPro" id="IPR013697">
    <property type="entry name" value="DNA_pol_e_suA_C"/>
</dbReference>
<dbReference type="InterPro" id="IPR023211">
    <property type="entry name" value="DNA_pol_palm_dom_sf"/>
</dbReference>
<dbReference type="InterPro" id="IPR029703">
    <property type="entry name" value="POL2"/>
</dbReference>
<dbReference type="InterPro" id="IPR055191">
    <property type="entry name" value="POL2_thumb"/>
</dbReference>
<dbReference type="InterPro" id="IPR012337">
    <property type="entry name" value="RNaseH-like_sf"/>
</dbReference>
<dbReference type="InterPro" id="IPR036397">
    <property type="entry name" value="RNaseH_sf"/>
</dbReference>
<dbReference type="InterPro" id="IPR054475">
    <property type="entry name" value="Znf-DPOE"/>
</dbReference>
<dbReference type="PANTHER" id="PTHR10670">
    <property type="entry name" value="DNA POLYMERASE EPSILON CATALYTIC SUBUNIT A"/>
    <property type="match status" value="1"/>
</dbReference>
<dbReference type="PANTHER" id="PTHR10670:SF0">
    <property type="entry name" value="DNA POLYMERASE EPSILON CATALYTIC SUBUNIT A"/>
    <property type="match status" value="1"/>
</dbReference>
<dbReference type="Pfam" id="PF03104">
    <property type="entry name" value="DNA_pol_B_exo1"/>
    <property type="match status" value="1"/>
</dbReference>
<dbReference type="Pfam" id="PF08490">
    <property type="entry name" value="DUF1744"/>
    <property type="match status" value="1"/>
</dbReference>
<dbReference type="Pfam" id="PF22634">
    <property type="entry name" value="POL2_thumb"/>
    <property type="match status" value="1"/>
</dbReference>
<dbReference type="Pfam" id="PF22912">
    <property type="entry name" value="zf-DPOE"/>
    <property type="match status" value="1"/>
</dbReference>
<dbReference type="SMART" id="SM01159">
    <property type="entry name" value="DUF1744"/>
    <property type="match status" value="1"/>
</dbReference>
<dbReference type="SMART" id="SM00486">
    <property type="entry name" value="POLBc"/>
    <property type="match status" value="1"/>
</dbReference>
<dbReference type="SUPFAM" id="SSF56672">
    <property type="entry name" value="DNA/RNA polymerases"/>
    <property type="match status" value="1"/>
</dbReference>
<dbReference type="SUPFAM" id="SSF53098">
    <property type="entry name" value="Ribonuclease H-like"/>
    <property type="match status" value="1"/>
</dbReference>
<comment type="function">
    <text evidence="1">DNA polymerase II participates in chromosomal DNA replication.</text>
</comment>
<comment type="catalytic activity">
    <reaction evidence="2">
        <text>DNA(n) + a 2'-deoxyribonucleoside 5'-triphosphate = DNA(n+1) + diphosphate</text>
        <dbReference type="Rhea" id="RHEA:22508"/>
        <dbReference type="Rhea" id="RHEA-COMP:17339"/>
        <dbReference type="Rhea" id="RHEA-COMP:17340"/>
        <dbReference type="ChEBI" id="CHEBI:33019"/>
        <dbReference type="ChEBI" id="CHEBI:61560"/>
        <dbReference type="ChEBI" id="CHEBI:173112"/>
        <dbReference type="EC" id="2.7.7.7"/>
    </reaction>
</comment>
<comment type="cofactor">
    <cofactor evidence="2">
        <name>[4Fe-4S] cluster</name>
        <dbReference type="ChEBI" id="CHEBI:49883"/>
    </cofactor>
    <text evidence="2">Binds 1 [4Fe-4S] cluster.</text>
</comment>
<comment type="subunit">
    <text evidence="1">Heterotetramer. Consists of 4 subunits: POL2, DPB2, DPB3 and DPB4 (By similarity).</text>
</comment>
<comment type="subcellular location">
    <subcellularLocation>
        <location evidence="1">Nucleus</location>
    </subcellularLocation>
</comment>
<comment type="domain">
    <text evidence="2">The CysA-type zinc finger is required for PCNA-binding.</text>
</comment>
<comment type="domain">
    <text evidence="2">The CysB motif binds 1 4Fe-4S cluster and is required for the formation of polymerase complexes.</text>
</comment>
<comment type="similarity">
    <text evidence="3">Belongs to the DNA polymerase type-B family.</text>
</comment>
<sequence length="2180" mass="250381">MSNRFKGSSTGHYVRAGAGGQPNTYGLTAHQLLQSKKVDDIDAMMGFERHISPQDGAGAGNSERIGWLCNMHPTVVADELNAGASGVGVAGVDFYFLDEEGGSFKSTILYDPYFLLSCQDSNRVHDVEEFLKKYLEGCLKTVEVVQKDDLAMDNHLVGLKRTLLKLNFVNTNNLFEARKLLRPILKDNEENQQQRDIYSLNDTTNRRDAKMLIDDIREYDVPYHVRVCIDKEIRVGKWYRVTSGGLVEYTDKVAFADPVVLAFDIETTKAPLKFPDSAIDQIMMISYMIDGEGYLITNREIISEDIEDFEYTPKPEYQGLFTVFNEEDERSLLERFFEHIRDVRPTVISTFNGDFFDWPFVEARSKIRGLSMFDEIGFAPDSEGEYKSSYCAHMDCYRWVKRDSYLPQGSQGLKAVTQVKLGYNPIELDPELMTPYAYEKPQHLSEYSVSDAVATYYLYMKYVHPFIFSLCTVLPLNPDEVLRKGTGTLCEMLLMVQAYDHGILLPNKHTEPIERFYDGHLLESETYVGGHVESLEAGVFRSDIDCDFTIDSTAIDELLQDLPHALKFCIEVENKTKVEDVLDFEDILNTITEQLQELKMNNKRKELPLIYHVDVASMYPNIMTTNRLQPDSMKTERDCASCDFNRPGKKCDRRLKWTWRGEFLPAKMDEYAMVKRALMNEVFPNKYKNTTKKLLTFDELSYSEQVSHIKKRLSEYSRKVYHRVKVTESVVRESIVCQRENPFYVNTVRSFRDRRYEFKGHAKTWKKKLSQIDPEDKVARDEARKMIVLYDSLQLAHKVILNSFYGYAMRKGSRWYSIEMAGITCSTGATIIQMARALVERIGRPLELDTDGIWCIIPRSFPENFEFTLKNGKKLYLSYPCSMLNYKVHQSFTNHQYQELVNDAKHKYKISSDNSIFFEVDGPYKAMILPTSKEEGKGIKKRYAVFNEDGSLAELKGFELKRRGELQLIKNFQQDIFKVFLEGRTLEECYGAVAKVANRWLDILDSKGSMLETEDLIDLICENKSMSKKLKEYDGQKSTSITTARRLGEFLGQEMVKDAGLQCKFIISSKPANAPVTERAIPVAIFSADHNIKKLFLRKWLLDSSLDNFDLRAILDWNYYRERLASVIQKIITIPAALQNVNNPVPRVDHPEWLRKKIATSESKFKQTSIGRFFKKSNGMPEIADIEDNAFSTESSSGAKVARVVTKKKRKRENETKDNQPVLPSVMPAIDEDYVGWLNYQKIKWQLQAEERHRRKQLFGSSSTLNDRSALGNIIKKHAESYANSDWEILQYKNSSEPGVVEVHALISGKVQSLKFHIHKTVFLKFKTDTLPPGGIPNCVIEKSNAILPNTKEDSYNTSSSLFRVTCPETVFLDEQNKVSSVFNSGNILGIYESTIPASERAIMELGNAVKFKSNVMGALSKGLQHGFQAKNLLSVTSERYLQRFDLEVIYLLNLTTNLGYEFFVLFNGWGDQAKVFVLKPSIAAQELSRHALEAAYEQQYLKKVKNFEKFRHYFMPAESAKFELHHFTDKSVLLRSLSKVVSSWSELKGSQLLLLLQSPTPSRLLKSIRILNQLPVVQLSTCELAFPTLNWQDQLIKKTVSHILQLGSWLSNLTILSNYTRIPICNLNLTNLGYVIDIMYARRLKLENIVLWWNQKQPLPDRGGIQNEYNPHTLSLATDLTSPVINNPEFYDSAVLEIEVNNLLVNTILTSTLINEAEGGDVAGPESGGREGGGFVEDAFSTASVNILRSLLKDLWDDALQNNSTADSLVHSFIGWVQSVDSKLFDYTLRYYVNMLTKKALFQLINEFRFMGSQVVFLDRNKILLKTSKNTIDNSYAYGQYLIKAIRTRPLFSYLDLKIVRYWDILLWMDQYNHGGCACLKIEEKERQDIQAYSSWHIKNFLAPIYQQEFDDWLVIILDSMIKCKQQFYELSGTQRLTQLPNRSQAADEDDENSVFAGFTKRFYQPFINRISKLYKTQQEYILDPNFRADYIIPDLPGRNPKMKAGNPLLELVKSLCHVLLLCKERTLEVRALRKEALEVFEIREFDSSASFENPASSLIINNFMCENCAYFSDLDICMSDLRSMFKCSKCYRTLRKPFIEENLIQKLQIQTIAYISQDLRCAKCRKIKSDTMSAYCTCSGKWVQTISKDTYLKNVQLFYHVAEYFGFSLLLSAIKGGI</sequence>
<feature type="chain" id="PRO_0000046457" description="DNA polymerase epsilon catalytic subunit A">
    <location>
        <begin position="1"/>
        <end position="2180"/>
    </location>
</feature>
<feature type="zinc finger region" description="CysA-type" evidence="2">
    <location>
        <begin position="2067"/>
        <end position="2092"/>
    </location>
</feature>
<feature type="short sequence motif" description="CysB motif" evidence="2">
    <location>
        <begin position="2123"/>
        <end position="2140"/>
    </location>
</feature>
<feature type="binding site" evidence="2">
    <location>
        <position position="2067"/>
    </location>
    <ligand>
        <name>Zn(2+)</name>
        <dbReference type="ChEBI" id="CHEBI:29105"/>
    </ligand>
</feature>
<feature type="binding site" evidence="2">
    <location>
        <position position="2070"/>
    </location>
    <ligand>
        <name>Zn(2+)</name>
        <dbReference type="ChEBI" id="CHEBI:29105"/>
    </ligand>
</feature>
<feature type="binding site" evidence="2">
    <location>
        <position position="2089"/>
    </location>
    <ligand>
        <name>Zn(2+)</name>
        <dbReference type="ChEBI" id="CHEBI:29105"/>
    </ligand>
</feature>
<feature type="binding site" evidence="2">
    <location>
        <position position="2092"/>
    </location>
    <ligand>
        <name>Zn(2+)</name>
        <dbReference type="ChEBI" id="CHEBI:29105"/>
    </ligand>
</feature>
<feature type="binding site" evidence="2">
    <location>
        <position position="2123"/>
    </location>
    <ligand>
        <name>[4Fe-4S] cluster</name>
        <dbReference type="ChEBI" id="CHEBI:49883"/>
    </ligand>
</feature>
<feature type="binding site" evidence="2">
    <location>
        <position position="2126"/>
    </location>
    <ligand>
        <name>[4Fe-4S] cluster</name>
        <dbReference type="ChEBI" id="CHEBI:49883"/>
    </ligand>
</feature>
<feature type="binding site" evidence="2">
    <location>
        <position position="2138"/>
    </location>
    <ligand>
        <name>[4Fe-4S] cluster</name>
        <dbReference type="ChEBI" id="CHEBI:49883"/>
    </ligand>
</feature>
<feature type="binding site" evidence="2">
    <location>
        <position position="2140"/>
    </location>
    <ligand>
        <name>[4Fe-4S] cluster</name>
        <dbReference type="ChEBI" id="CHEBI:49883"/>
    </ligand>
</feature>